<evidence type="ECO:0000250" key="1">
    <source>
        <dbReference type="UniProtKB" id="P47118"/>
    </source>
</evidence>
<evidence type="ECO:0000269" key="2">
    <source>
    </source>
</evidence>
<evidence type="ECO:0000269" key="3">
    <source>
    </source>
</evidence>
<evidence type="ECO:0000303" key="4">
    <source>
    </source>
</evidence>
<evidence type="ECO:0000305" key="5"/>
<evidence type="ECO:0000312" key="6">
    <source>
        <dbReference type="HGNC" id="HGNC:24857"/>
    </source>
</evidence>
<proteinExistence type="evidence at protein level"/>
<accession>Q9NRH1</accession>
<accession>A4D1W4</accession>
<accession>B4DE83</accession>
<accession>Q6IAF7</accession>
<accession>Q8WVZ5</accession>
<name>YAE1_HUMAN</name>
<sequence length="226" mass="25299">MSWVQAASLIQGPGDKGDVFDEEADESLLAQREWQSNMQRRVKEGYRDGIDAGKAVTLQQGFNQGYKKGAEVILNYGRLRGTLSALLSWCHLHNNNSTLINKINNLLDAVGQCEEYVLKHLKSITPPSHVVDLLDSIEDMDLCHVVPAEKKIDEAKDERLCENNAEFNKNCSKSHSGIDCSYVECCRTQEHAHSENPSPTWILEQTASLVKQLGLSVDVLQHLKQL</sequence>
<protein>
    <recommendedName>
        <fullName evidence="5">Protein YAE1 homolog</fullName>
    </recommendedName>
    <alternativeName>
        <fullName>Yae1 domain-containing protein 1</fullName>
    </alternativeName>
</protein>
<feature type="chain" id="PRO_0000089591" description="Protein YAE1 homolog">
    <location>
        <begin position="1"/>
        <end position="226"/>
    </location>
</feature>
<feature type="region of interest" description="deca-GX3 motif; required for interaction with LTO1" evidence="1">
    <location>
        <begin position="45"/>
        <end position="85"/>
    </location>
</feature>
<feature type="splice variant" id="VSP_055295" description="In isoform 2." evidence="4">
    <original>SALLSWCHLHNNNSTLINKINNLLDAVGQCEEYVLKHLKSITPPSHVVDLLDSIEDMDLCHVVPAEKKIDEAKDERLCENNAEFNKNCSKSHSGIDCSYVECCRTQEHAHSENPSPTWILEQT</original>
    <variation>RNSTDWSLLGLRAPLRSPEVGTQLLPRPLPVPGHMASGATPKQPTELEATLLSLVPQSGRATPRFPARLRAPGPGTPSHRRRFRRKPHRDPAAACPAWPPEAPSNSETHFSTYNRIIIRGGHI</variation>
    <location>
        <begin position="84"/>
        <end position="206"/>
    </location>
</feature>
<feature type="splice variant" id="VSP_055296" description="In isoform 2." evidence="4">
    <location>
        <begin position="207"/>
        <end position="226"/>
    </location>
</feature>
<feature type="sequence variant" id="VAR_024306" description="In dbSNP:rs6947660.">
    <original>K</original>
    <variation>E</variation>
    <location>
        <position position="68"/>
    </location>
</feature>
<feature type="sequence conflict" description="In Ref. 3; CAG33479." evidence="5" ref="3">
    <original>D</original>
    <variation>G</variation>
    <location>
        <position position="18"/>
    </location>
</feature>
<feature type="sequence conflict" description="In Ref. 7; AAH22043." evidence="5" ref="7">
    <original>D</original>
    <variation>E</variation>
    <location>
        <position position="21"/>
    </location>
</feature>
<feature type="sequence conflict" description="In Ref. 3; CAG33479." evidence="5" ref="3">
    <original>G</original>
    <variation>D</variation>
    <location>
        <position position="214"/>
    </location>
</feature>
<dbReference type="EMBL" id="AF226046">
    <property type="protein sequence ID" value="AAF86946.1"/>
    <property type="molecule type" value="mRNA"/>
</dbReference>
<dbReference type="EMBL" id="AK293511">
    <property type="protein sequence ID" value="BAG56994.1"/>
    <property type="molecule type" value="mRNA"/>
</dbReference>
<dbReference type="EMBL" id="CR457198">
    <property type="protein sequence ID" value="CAG33479.1"/>
    <property type="molecule type" value="mRNA"/>
</dbReference>
<dbReference type="EMBL" id="AC004837">
    <property type="status" value="NOT_ANNOTATED_CDS"/>
    <property type="molecule type" value="Genomic_DNA"/>
</dbReference>
<dbReference type="EMBL" id="AC011290">
    <property type="protein sequence ID" value="AAQ96864.1"/>
    <property type="molecule type" value="Genomic_DNA"/>
</dbReference>
<dbReference type="EMBL" id="CH236951">
    <property type="protein sequence ID" value="EAL23993.1"/>
    <property type="molecule type" value="Genomic_DNA"/>
</dbReference>
<dbReference type="EMBL" id="CH471073">
    <property type="protein sequence ID" value="EAW94120.1"/>
    <property type="molecule type" value="Genomic_DNA"/>
</dbReference>
<dbReference type="EMBL" id="BC022043">
    <property type="protein sequence ID" value="AAH22043.1"/>
    <property type="molecule type" value="mRNA"/>
</dbReference>
<dbReference type="CCDS" id="CCDS5459.1">
    <molecule id="Q9NRH1-1"/>
</dbReference>
<dbReference type="CCDS" id="CCDS64630.1">
    <molecule id="Q9NRH1-2"/>
</dbReference>
<dbReference type="RefSeq" id="NP_001269375.1">
    <molecule id="Q9NRH1-2"/>
    <property type="nucleotide sequence ID" value="NM_001282446.2"/>
</dbReference>
<dbReference type="RefSeq" id="NP_064577.1">
    <molecule id="Q9NRH1-1"/>
    <property type="nucleotide sequence ID" value="NM_020192.5"/>
</dbReference>
<dbReference type="SMR" id="Q9NRH1"/>
<dbReference type="BioGRID" id="121317">
    <property type="interactions" value="30"/>
</dbReference>
<dbReference type="CORUM" id="Q9NRH1"/>
<dbReference type="FunCoup" id="Q9NRH1">
    <property type="interactions" value="367"/>
</dbReference>
<dbReference type="IntAct" id="Q9NRH1">
    <property type="interactions" value="30"/>
</dbReference>
<dbReference type="MINT" id="Q9NRH1"/>
<dbReference type="STRING" id="9606.ENSP00000223273"/>
<dbReference type="GlyGen" id="Q9NRH1">
    <property type="glycosylation" value="1 site, 1 O-linked glycan (1 site)"/>
</dbReference>
<dbReference type="iPTMnet" id="Q9NRH1"/>
<dbReference type="PhosphoSitePlus" id="Q9NRH1"/>
<dbReference type="BioMuta" id="YAE1D1"/>
<dbReference type="DMDM" id="68565323"/>
<dbReference type="jPOST" id="Q9NRH1"/>
<dbReference type="MassIVE" id="Q9NRH1"/>
<dbReference type="PaxDb" id="9606-ENSP00000223273"/>
<dbReference type="PeptideAtlas" id="Q9NRH1"/>
<dbReference type="ProteomicsDB" id="3927"/>
<dbReference type="ProteomicsDB" id="82361">
    <molecule id="Q9NRH1-1"/>
</dbReference>
<dbReference type="Pumba" id="Q9NRH1"/>
<dbReference type="Antibodypedia" id="35328">
    <property type="antibodies" value="102 antibodies from 17 providers"/>
</dbReference>
<dbReference type="DNASU" id="57002"/>
<dbReference type="Ensembl" id="ENST00000223273.7">
    <molecule id="Q9NRH1-1"/>
    <property type="protein sequence ID" value="ENSP00000223273.2"/>
    <property type="gene ID" value="ENSG00000241127.8"/>
</dbReference>
<dbReference type="Ensembl" id="ENST00000432096.2">
    <molecule id="Q9NRH1-2"/>
    <property type="protein sequence ID" value="ENSP00000395777.2"/>
    <property type="gene ID" value="ENSG00000241127.8"/>
</dbReference>
<dbReference type="GeneID" id="57002"/>
<dbReference type="KEGG" id="hsa:57002"/>
<dbReference type="MANE-Select" id="ENST00000223273.7">
    <property type="protein sequence ID" value="ENSP00000223273.2"/>
    <property type="RefSeq nucleotide sequence ID" value="NM_020192.5"/>
    <property type="RefSeq protein sequence ID" value="NP_064577.1"/>
</dbReference>
<dbReference type="UCSC" id="uc003thc.5">
    <molecule id="Q9NRH1-1"/>
    <property type="organism name" value="human"/>
</dbReference>
<dbReference type="AGR" id="HGNC:24857"/>
<dbReference type="CTD" id="57002"/>
<dbReference type="DisGeNET" id="57002"/>
<dbReference type="GeneCards" id="YAE1"/>
<dbReference type="HGNC" id="HGNC:24857">
    <property type="gene designation" value="YAE1"/>
</dbReference>
<dbReference type="HPA" id="ENSG00000241127">
    <property type="expression patterns" value="Low tissue specificity"/>
</dbReference>
<dbReference type="neXtProt" id="NX_Q9NRH1"/>
<dbReference type="OpenTargets" id="ENSG00000241127"/>
<dbReference type="PharmGKB" id="PA134961882"/>
<dbReference type="VEuPathDB" id="HostDB:ENSG00000241127"/>
<dbReference type="eggNOG" id="KOG4774">
    <property type="taxonomic scope" value="Eukaryota"/>
</dbReference>
<dbReference type="GeneTree" id="ENSGT00390000011176"/>
<dbReference type="HOGENOM" id="CLU_108310_0_0_1"/>
<dbReference type="InParanoid" id="Q9NRH1"/>
<dbReference type="OMA" id="VKKQTVW"/>
<dbReference type="OrthoDB" id="20086at2759"/>
<dbReference type="PAN-GO" id="Q9NRH1">
    <property type="GO annotations" value="0 GO annotations based on evolutionary models"/>
</dbReference>
<dbReference type="PhylomeDB" id="Q9NRH1"/>
<dbReference type="TreeFam" id="TF333198"/>
<dbReference type="PathwayCommons" id="Q9NRH1"/>
<dbReference type="SignaLink" id="Q9NRH1"/>
<dbReference type="BioGRID-ORCS" id="57002">
    <property type="hits" value="709 hits in 1161 CRISPR screens"/>
</dbReference>
<dbReference type="ChiTaRS" id="YAE1D1">
    <property type="organism name" value="human"/>
</dbReference>
<dbReference type="GenomeRNAi" id="57002"/>
<dbReference type="Pharos" id="Q9NRH1">
    <property type="development level" value="Tbio"/>
</dbReference>
<dbReference type="PRO" id="PR:Q9NRH1"/>
<dbReference type="Proteomes" id="UP000005640">
    <property type="component" value="Chromosome 7"/>
</dbReference>
<dbReference type="RNAct" id="Q9NRH1">
    <property type="molecule type" value="protein"/>
</dbReference>
<dbReference type="Bgee" id="ENSG00000241127">
    <property type="expression patterns" value="Expressed in left ventricle myocardium and 184 other cell types or tissues"/>
</dbReference>
<dbReference type="ExpressionAtlas" id="Q9NRH1">
    <property type="expression patterns" value="baseline and differential"/>
</dbReference>
<dbReference type="GO" id="GO:0005737">
    <property type="term" value="C:cytoplasm"/>
    <property type="evidence" value="ECO:0007669"/>
    <property type="project" value="UniProtKB-SubCell"/>
</dbReference>
<dbReference type="GO" id="GO:0005634">
    <property type="term" value="C:nucleus"/>
    <property type="evidence" value="ECO:0007669"/>
    <property type="project" value="UniProtKB-SubCell"/>
</dbReference>
<dbReference type="GO" id="GO:0051604">
    <property type="term" value="P:protein maturation"/>
    <property type="evidence" value="ECO:0000314"/>
    <property type="project" value="UniProtKB"/>
</dbReference>
<dbReference type="InterPro" id="IPR019191">
    <property type="entry name" value="Essential_protein_Yae1_N"/>
</dbReference>
<dbReference type="InterPro" id="IPR038881">
    <property type="entry name" value="Yae1-like"/>
</dbReference>
<dbReference type="PANTHER" id="PTHR18829">
    <property type="entry name" value="PROTEIN YAE1 HOMOLOG"/>
    <property type="match status" value="1"/>
</dbReference>
<dbReference type="PANTHER" id="PTHR18829:SF0">
    <property type="entry name" value="PROTEIN YAE1 HOMOLOG"/>
    <property type="match status" value="1"/>
</dbReference>
<dbReference type="Pfam" id="PF09811">
    <property type="entry name" value="Yae1_N"/>
    <property type="match status" value="1"/>
</dbReference>
<gene>
    <name evidence="6" type="primary">YAE1</name>
    <name type="synonym">C7orf36</name>
    <name evidence="6" type="synonym">YAE1D1</name>
    <name type="ORF">GK003</name>
</gene>
<comment type="function">
    <text evidence="3">The complex LTO1:YAE1 functions as a target specific adapter that probably recruits apo-ABCE1 to the cytosolic iron-sulfur protein assembly (CIA) complex machinery (PubMed:26182403). May be required for biogenesis of the large ribosomal subunit and initiation of translation (PubMed:26182403).</text>
</comment>
<comment type="subunit">
    <text evidence="2">Forms a complex with LTO1.</text>
</comment>
<comment type="interaction">
    <interactant intactId="EBI-712905">
        <id>Q9NRH1</id>
    </interactant>
    <interactant intactId="EBI-6251402">
        <id>Q9UPT5-1</id>
        <label>EXOC7</label>
    </interactant>
    <organismsDiffer>false</organismsDiffer>
    <experiments>3</experiments>
</comment>
<comment type="interaction">
    <interactant intactId="EBI-712905">
        <id>Q9NRH1</id>
    </interactant>
    <interactant intactId="EBI-12249832">
        <id>Q8WV07</id>
        <label>LTO1</label>
    </interactant>
    <organismsDiffer>false</organismsDiffer>
    <experiments>8</experiments>
</comment>
<comment type="subcellular location">
    <subcellularLocation>
        <location evidence="1">Cytoplasm</location>
    </subcellularLocation>
    <subcellularLocation>
        <location evidence="1">Nucleus</location>
    </subcellularLocation>
</comment>
<comment type="alternative products">
    <event type="alternative splicing"/>
    <isoform>
        <id>Q9NRH1-1</id>
        <name>1</name>
        <sequence type="displayed"/>
    </isoform>
    <isoform>
        <id>Q9NRH1-2</id>
        <name>2</name>
        <sequence type="described" ref="VSP_055295 VSP_055296"/>
    </isoform>
</comment>
<reference key="1">
    <citation type="submission" date="2000-01" db="EMBL/GenBank/DDBJ databases">
        <title>A novel gene expressed in human liver cancer tissue.</title>
        <authorList>
            <person name="Li Y."/>
            <person name="Wu T."/>
            <person name="Xu S."/>
            <person name="Ren S."/>
            <person name="Chen Z."/>
            <person name="Han Z."/>
        </authorList>
    </citation>
    <scope>NUCLEOTIDE SEQUENCE [LARGE SCALE MRNA] (ISOFORM 1)</scope>
    <source>
        <tissue>Liver cancer</tissue>
    </source>
</reference>
<reference key="2">
    <citation type="journal article" date="2004" name="Nat. Genet.">
        <title>Complete sequencing and characterization of 21,243 full-length human cDNAs.</title>
        <authorList>
            <person name="Ota T."/>
            <person name="Suzuki Y."/>
            <person name="Nishikawa T."/>
            <person name="Otsuki T."/>
            <person name="Sugiyama T."/>
            <person name="Irie R."/>
            <person name="Wakamatsu A."/>
            <person name="Hayashi K."/>
            <person name="Sato H."/>
            <person name="Nagai K."/>
            <person name="Kimura K."/>
            <person name="Makita H."/>
            <person name="Sekine M."/>
            <person name="Obayashi M."/>
            <person name="Nishi T."/>
            <person name="Shibahara T."/>
            <person name="Tanaka T."/>
            <person name="Ishii S."/>
            <person name="Yamamoto J."/>
            <person name="Saito K."/>
            <person name="Kawai Y."/>
            <person name="Isono Y."/>
            <person name="Nakamura Y."/>
            <person name="Nagahari K."/>
            <person name="Murakami K."/>
            <person name="Yasuda T."/>
            <person name="Iwayanagi T."/>
            <person name="Wagatsuma M."/>
            <person name="Shiratori A."/>
            <person name="Sudo H."/>
            <person name="Hosoiri T."/>
            <person name="Kaku Y."/>
            <person name="Kodaira H."/>
            <person name="Kondo H."/>
            <person name="Sugawara M."/>
            <person name="Takahashi M."/>
            <person name="Kanda K."/>
            <person name="Yokoi T."/>
            <person name="Furuya T."/>
            <person name="Kikkawa E."/>
            <person name="Omura Y."/>
            <person name="Abe K."/>
            <person name="Kamihara K."/>
            <person name="Katsuta N."/>
            <person name="Sato K."/>
            <person name="Tanikawa M."/>
            <person name="Yamazaki M."/>
            <person name="Ninomiya K."/>
            <person name="Ishibashi T."/>
            <person name="Yamashita H."/>
            <person name="Murakawa K."/>
            <person name="Fujimori K."/>
            <person name="Tanai H."/>
            <person name="Kimata M."/>
            <person name="Watanabe M."/>
            <person name="Hiraoka S."/>
            <person name="Chiba Y."/>
            <person name="Ishida S."/>
            <person name="Ono Y."/>
            <person name="Takiguchi S."/>
            <person name="Watanabe S."/>
            <person name="Yosida M."/>
            <person name="Hotuta T."/>
            <person name="Kusano J."/>
            <person name="Kanehori K."/>
            <person name="Takahashi-Fujii A."/>
            <person name="Hara H."/>
            <person name="Tanase T.-O."/>
            <person name="Nomura Y."/>
            <person name="Togiya S."/>
            <person name="Komai F."/>
            <person name="Hara R."/>
            <person name="Takeuchi K."/>
            <person name="Arita M."/>
            <person name="Imose N."/>
            <person name="Musashino K."/>
            <person name="Yuuki H."/>
            <person name="Oshima A."/>
            <person name="Sasaki N."/>
            <person name="Aotsuka S."/>
            <person name="Yoshikawa Y."/>
            <person name="Matsunawa H."/>
            <person name="Ichihara T."/>
            <person name="Shiohata N."/>
            <person name="Sano S."/>
            <person name="Moriya S."/>
            <person name="Momiyama H."/>
            <person name="Satoh N."/>
            <person name="Takami S."/>
            <person name="Terashima Y."/>
            <person name="Suzuki O."/>
            <person name="Nakagawa S."/>
            <person name="Senoh A."/>
            <person name="Mizoguchi H."/>
            <person name="Goto Y."/>
            <person name="Shimizu F."/>
            <person name="Wakebe H."/>
            <person name="Hishigaki H."/>
            <person name="Watanabe T."/>
            <person name="Sugiyama A."/>
            <person name="Takemoto M."/>
            <person name="Kawakami B."/>
            <person name="Yamazaki M."/>
            <person name="Watanabe K."/>
            <person name="Kumagai A."/>
            <person name="Itakura S."/>
            <person name="Fukuzumi Y."/>
            <person name="Fujimori Y."/>
            <person name="Komiyama M."/>
            <person name="Tashiro H."/>
            <person name="Tanigami A."/>
            <person name="Fujiwara T."/>
            <person name="Ono T."/>
            <person name="Yamada K."/>
            <person name="Fujii Y."/>
            <person name="Ozaki K."/>
            <person name="Hirao M."/>
            <person name="Ohmori Y."/>
            <person name="Kawabata A."/>
            <person name="Hikiji T."/>
            <person name="Kobatake N."/>
            <person name="Inagaki H."/>
            <person name="Ikema Y."/>
            <person name="Okamoto S."/>
            <person name="Okitani R."/>
            <person name="Kawakami T."/>
            <person name="Noguchi S."/>
            <person name="Itoh T."/>
            <person name="Shigeta K."/>
            <person name="Senba T."/>
            <person name="Matsumura K."/>
            <person name="Nakajima Y."/>
            <person name="Mizuno T."/>
            <person name="Morinaga M."/>
            <person name="Sasaki M."/>
            <person name="Togashi T."/>
            <person name="Oyama M."/>
            <person name="Hata H."/>
            <person name="Watanabe M."/>
            <person name="Komatsu T."/>
            <person name="Mizushima-Sugano J."/>
            <person name="Satoh T."/>
            <person name="Shirai Y."/>
            <person name="Takahashi Y."/>
            <person name="Nakagawa K."/>
            <person name="Okumura K."/>
            <person name="Nagase T."/>
            <person name="Nomura N."/>
            <person name="Kikuchi H."/>
            <person name="Masuho Y."/>
            <person name="Yamashita R."/>
            <person name="Nakai K."/>
            <person name="Yada T."/>
            <person name="Nakamura Y."/>
            <person name="Ohara O."/>
            <person name="Isogai T."/>
            <person name="Sugano S."/>
        </authorList>
    </citation>
    <scope>NUCLEOTIDE SEQUENCE [LARGE SCALE MRNA] (ISOFORM 2)</scope>
    <source>
        <tissue>Cerebellum</tissue>
    </source>
</reference>
<reference key="3">
    <citation type="submission" date="2004-06" db="EMBL/GenBank/DDBJ databases">
        <title>Cloning of human full open reading frames in Gateway(TM) system entry vector (pDONR201).</title>
        <authorList>
            <person name="Ebert L."/>
            <person name="Schick M."/>
            <person name="Neubert P."/>
            <person name="Schatten R."/>
            <person name="Henze S."/>
            <person name="Korn B."/>
        </authorList>
    </citation>
    <scope>NUCLEOTIDE SEQUENCE [LARGE SCALE MRNA] (ISOFORM 1)</scope>
</reference>
<reference key="4">
    <citation type="journal article" date="2003" name="Science">
        <title>Human chromosome 7: DNA sequence and biology.</title>
        <authorList>
            <person name="Scherer S.W."/>
            <person name="Cheung J."/>
            <person name="MacDonald J.R."/>
            <person name="Osborne L.R."/>
            <person name="Nakabayashi K."/>
            <person name="Herbrick J.-A."/>
            <person name="Carson A.R."/>
            <person name="Parker-Katiraee L."/>
            <person name="Skaug J."/>
            <person name="Khaja R."/>
            <person name="Zhang J."/>
            <person name="Hudek A.K."/>
            <person name="Li M."/>
            <person name="Haddad M."/>
            <person name="Duggan G.E."/>
            <person name="Fernandez B.A."/>
            <person name="Kanematsu E."/>
            <person name="Gentles S."/>
            <person name="Christopoulos C.C."/>
            <person name="Choufani S."/>
            <person name="Kwasnicka D."/>
            <person name="Zheng X.H."/>
            <person name="Lai Z."/>
            <person name="Nusskern D.R."/>
            <person name="Zhang Q."/>
            <person name="Gu Z."/>
            <person name="Lu F."/>
            <person name="Zeesman S."/>
            <person name="Nowaczyk M.J."/>
            <person name="Teshima I."/>
            <person name="Chitayat D."/>
            <person name="Shuman C."/>
            <person name="Weksberg R."/>
            <person name="Zackai E.H."/>
            <person name="Grebe T.A."/>
            <person name="Cox S.R."/>
            <person name="Kirkpatrick S.J."/>
            <person name="Rahman N."/>
            <person name="Friedman J.M."/>
            <person name="Heng H.H.Q."/>
            <person name="Pelicci P.G."/>
            <person name="Lo-Coco F."/>
            <person name="Belloni E."/>
            <person name="Shaffer L.G."/>
            <person name="Pober B."/>
            <person name="Morton C.C."/>
            <person name="Gusella J.F."/>
            <person name="Bruns G.A.P."/>
            <person name="Korf B.R."/>
            <person name="Quade B.J."/>
            <person name="Ligon A.H."/>
            <person name="Ferguson H."/>
            <person name="Higgins A.W."/>
            <person name="Leach N.T."/>
            <person name="Herrick S.R."/>
            <person name="Lemyre E."/>
            <person name="Farra C.G."/>
            <person name="Kim H.-G."/>
            <person name="Summers A.M."/>
            <person name="Gripp K.W."/>
            <person name="Roberts W."/>
            <person name="Szatmari P."/>
            <person name="Winsor E.J.T."/>
            <person name="Grzeschik K.-H."/>
            <person name="Teebi A."/>
            <person name="Minassian B.A."/>
            <person name="Kere J."/>
            <person name="Armengol L."/>
            <person name="Pujana M.A."/>
            <person name="Estivill X."/>
            <person name="Wilson M.D."/>
            <person name="Koop B.F."/>
            <person name="Tosi S."/>
            <person name="Moore G.E."/>
            <person name="Boright A.P."/>
            <person name="Zlotorynski E."/>
            <person name="Kerem B."/>
            <person name="Kroisel P.M."/>
            <person name="Petek E."/>
            <person name="Oscier D.G."/>
            <person name="Mould S.J."/>
            <person name="Doehner H."/>
            <person name="Doehner K."/>
            <person name="Rommens J.M."/>
            <person name="Vincent J.B."/>
            <person name="Venter J.C."/>
            <person name="Li P.W."/>
            <person name="Mural R.J."/>
            <person name="Adams M.D."/>
            <person name="Tsui L.-C."/>
        </authorList>
    </citation>
    <scope>NUCLEOTIDE SEQUENCE [LARGE SCALE GENOMIC DNA]</scope>
</reference>
<reference key="5">
    <citation type="submission" date="2005-07" db="EMBL/GenBank/DDBJ databases">
        <authorList>
            <person name="Mural R.J."/>
            <person name="Istrail S."/>
            <person name="Sutton G.G."/>
            <person name="Florea L."/>
            <person name="Halpern A.L."/>
            <person name="Mobarry C.M."/>
            <person name="Lippert R."/>
            <person name="Walenz B."/>
            <person name="Shatkay H."/>
            <person name="Dew I."/>
            <person name="Miller J.R."/>
            <person name="Flanigan M.J."/>
            <person name="Edwards N.J."/>
            <person name="Bolanos R."/>
            <person name="Fasulo D."/>
            <person name="Halldorsson B.V."/>
            <person name="Hannenhalli S."/>
            <person name="Turner R."/>
            <person name="Yooseph S."/>
            <person name="Lu F."/>
            <person name="Nusskern D.R."/>
            <person name="Shue B.C."/>
            <person name="Zheng X.H."/>
            <person name="Zhong F."/>
            <person name="Delcher A.L."/>
            <person name="Huson D.H."/>
            <person name="Kravitz S.A."/>
            <person name="Mouchard L."/>
            <person name="Reinert K."/>
            <person name="Remington K.A."/>
            <person name="Clark A.G."/>
            <person name="Waterman M.S."/>
            <person name="Eichler E.E."/>
            <person name="Adams M.D."/>
            <person name="Hunkapiller M.W."/>
            <person name="Myers E.W."/>
            <person name="Venter J.C."/>
        </authorList>
    </citation>
    <scope>NUCLEOTIDE SEQUENCE [LARGE SCALE GENOMIC DNA]</scope>
</reference>
<reference key="6">
    <citation type="journal article" date="2003" name="Nature">
        <title>The DNA sequence of human chromosome 7.</title>
        <authorList>
            <person name="Hillier L.W."/>
            <person name="Fulton R.S."/>
            <person name="Fulton L.A."/>
            <person name="Graves T.A."/>
            <person name="Pepin K.H."/>
            <person name="Wagner-McPherson C."/>
            <person name="Layman D."/>
            <person name="Maas J."/>
            <person name="Jaeger S."/>
            <person name="Walker R."/>
            <person name="Wylie K."/>
            <person name="Sekhon M."/>
            <person name="Becker M.C."/>
            <person name="O'Laughlin M.D."/>
            <person name="Schaller M.E."/>
            <person name="Fewell G.A."/>
            <person name="Delehaunty K.D."/>
            <person name="Miner T.L."/>
            <person name="Nash W.E."/>
            <person name="Cordes M."/>
            <person name="Du H."/>
            <person name="Sun H."/>
            <person name="Edwards J."/>
            <person name="Bradshaw-Cordum H."/>
            <person name="Ali J."/>
            <person name="Andrews S."/>
            <person name="Isak A."/>
            <person name="Vanbrunt A."/>
            <person name="Nguyen C."/>
            <person name="Du F."/>
            <person name="Lamar B."/>
            <person name="Courtney L."/>
            <person name="Kalicki J."/>
            <person name="Ozersky P."/>
            <person name="Bielicki L."/>
            <person name="Scott K."/>
            <person name="Holmes A."/>
            <person name="Harkins R."/>
            <person name="Harris A."/>
            <person name="Strong C.M."/>
            <person name="Hou S."/>
            <person name="Tomlinson C."/>
            <person name="Dauphin-Kohlberg S."/>
            <person name="Kozlowicz-Reilly A."/>
            <person name="Leonard S."/>
            <person name="Rohlfing T."/>
            <person name="Rock S.M."/>
            <person name="Tin-Wollam A.-M."/>
            <person name="Abbott A."/>
            <person name="Minx P."/>
            <person name="Maupin R."/>
            <person name="Strowmatt C."/>
            <person name="Latreille P."/>
            <person name="Miller N."/>
            <person name="Johnson D."/>
            <person name="Murray J."/>
            <person name="Woessner J.P."/>
            <person name="Wendl M.C."/>
            <person name="Yang S.-P."/>
            <person name="Schultz B.R."/>
            <person name="Wallis J.W."/>
            <person name="Spieth J."/>
            <person name="Bieri T.A."/>
            <person name="Nelson J.O."/>
            <person name="Berkowicz N."/>
            <person name="Wohldmann P.E."/>
            <person name="Cook L.L."/>
            <person name="Hickenbotham M.T."/>
            <person name="Eldred J."/>
            <person name="Williams D."/>
            <person name="Bedell J.A."/>
            <person name="Mardis E.R."/>
            <person name="Clifton S.W."/>
            <person name="Chissoe S.L."/>
            <person name="Marra M.A."/>
            <person name="Raymond C."/>
            <person name="Haugen E."/>
            <person name="Gillett W."/>
            <person name="Zhou Y."/>
            <person name="James R."/>
            <person name="Phelps K."/>
            <person name="Iadanoto S."/>
            <person name="Bubb K."/>
            <person name="Simms E."/>
            <person name="Levy R."/>
            <person name="Clendenning J."/>
            <person name="Kaul R."/>
            <person name="Kent W.J."/>
            <person name="Furey T.S."/>
            <person name="Baertsch R.A."/>
            <person name="Brent M.R."/>
            <person name="Keibler E."/>
            <person name="Flicek P."/>
            <person name="Bork P."/>
            <person name="Suyama M."/>
            <person name="Bailey J.A."/>
            <person name="Portnoy M.E."/>
            <person name="Torrents D."/>
            <person name="Chinwalla A.T."/>
            <person name="Gish W.R."/>
            <person name="Eddy S.R."/>
            <person name="McPherson J.D."/>
            <person name="Olson M.V."/>
            <person name="Eichler E.E."/>
            <person name="Green E.D."/>
            <person name="Waterston R.H."/>
            <person name="Wilson R.K."/>
        </authorList>
    </citation>
    <scope>NUCLEOTIDE SEQUENCE [LARGE SCALE GENOMIC DNA]</scope>
</reference>
<reference key="7">
    <citation type="journal article" date="2004" name="Genome Res.">
        <title>The status, quality, and expansion of the NIH full-length cDNA project: the Mammalian Gene Collection (MGC).</title>
        <authorList>
            <consortium name="The MGC Project Team"/>
        </authorList>
    </citation>
    <scope>NUCLEOTIDE SEQUENCE [LARGE SCALE MRNA] (ISOFORM 1)</scope>
    <source>
        <tissue>Liver</tissue>
    </source>
</reference>
<reference key="8">
    <citation type="journal article" date="2014" name="Oncogene">
        <title>The function of ORAOV1/LTO1, a gene that is overexpressed frequently in cancer: essential roles in the function and biogenesis of the ribosome.</title>
        <authorList>
            <person name="Zhai C."/>
            <person name="Li Y."/>
            <person name="Mascarenhas C."/>
            <person name="Lin Q."/>
            <person name="Li K."/>
            <person name="Vyrides I."/>
            <person name="Grant C.M."/>
            <person name="Panaretou B."/>
        </authorList>
    </citation>
    <scope>INTERACTION WITH LTO1</scope>
</reference>
<reference key="9">
    <citation type="journal article" date="2015" name="Elife">
        <title>The deca-GX3 proteins Yae1-Lto1 function as adaptors recruiting the ABC protein Rli1 for iron-sulfur cluster insertion.</title>
        <authorList>
            <person name="Paul V.D."/>
            <person name="Muehlenhoff U."/>
            <person name="Stuempfig M."/>
            <person name="Seebacher J."/>
            <person name="Kugler K.G."/>
            <person name="Renicke C."/>
            <person name="Taxis C."/>
            <person name="Gavin A.C."/>
            <person name="Pierik A.J."/>
            <person name="Lill R."/>
        </authorList>
    </citation>
    <scope>FUNCTION</scope>
</reference>
<keyword id="KW-0025">Alternative splicing</keyword>
<keyword id="KW-0963">Cytoplasm</keyword>
<keyword id="KW-0539">Nucleus</keyword>
<keyword id="KW-1267">Proteomics identification</keyword>
<keyword id="KW-1185">Reference proteome</keyword>
<organism>
    <name type="scientific">Homo sapiens</name>
    <name type="common">Human</name>
    <dbReference type="NCBI Taxonomy" id="9606"/>
    <lineage>
        <taxon>Eukaryota</taxon>
        <taxon>Metazoa</taxon>
        <taxon>Chordata</taxon>
        <taxon>Craniata</taxon>
        <taxon>Vertebrata</taxon>
        <taxon>Euteleostomi</taxon>
        <taxon>Mammalia</taxon>
        <taxon>Eutheria</taxon>
        <taxon>Euarchontoglires</taxon>
        <taxon>Primates</taxon>
        <taxon>Haplorrhini</taxon>
        <taxon>Catarrhini</taxon>
        <taxon>Hominidae</taxon>
        <taxon>Homo</taxon>
    </lineage>
</organism>